<proteinExistence type="inferred from homology"/>
<comment type="function">
    <text evidence="1">Cleaves peptides in various proteins in a process that requires ATP hydrolysis. Has a chymotrypsin-like activity. Plays a major role in the degradation of misfolded proteins.</text>
</comment>
<comment type="catalytic activity">
    <reaction evidence="1">
        <text>Hydrolysis of proteins to small peptides in the presence of ATP and magnesium. alpha-casein is the usual test substrate. In the absence of ATP, only oligopeptides shorter than five residues are hydrolyzed (such as succinyl-Leu-Tyr-|-NHMec, and Leu-Tyr-Leu-|-Tyr-Trp, in which cleavage of the -Tyr-|-Leu- and -Tyr-|-Trp bonds also occurs).</text>
        <dbReference type="EC" id="3.4.21.92"/>
    </reaction>
</comment>
<comment type="subunit">
    <text evidence="1">Fourteen ClpP subunits assemble into 2 heptameric rings which stack back to back to give a disk-like structure with a central cavity, resembling the structure of eukaryotic proteasomes.</text>
</comment>
<comment type="subcellular location">
    <subcellularLocation>
        <location evidence="1">Cytoplasm</location>
    </subcellularLocation>
</comment>
<comment type="similarity">
    <text evidence="1">Belongs to the peptidase S14 family.</text>
</comment>
<gene>
    <name evidence="1" type="primary">clpP</name>
    <name type="ordered locus">Wbm0553</name>
</gene>
<reference key="1">
    <citation type="journal article" date="2005" name="PLoS Biol.">
        <title>The Wolbachia genome of Brugia malayi: endosymbiont evolution within a human pathogenic nematode.</title>
        <authorList>
            <person name="Foster J."/>
            <person name="Ganatra M."/>
            <person name="Kamal I."/>
            <person name="Ware J."/>
            <person name="Makarova K."/>
            <person name="Ivanova N."/>
            <person name="Bhattacharyya A."/>
            <person name="Kapatral V."/>
            <person name="Kumar S."/>
            <person name="Posfai J."/>
            <person name="Vincze T."/>
            <person name="Ingram J."/>
            <person name="Moran L."/>
            <person name="Lapidus A."/>
            <person name="Omelchenko M."/>
            <person name="Kyrpides N."/>
            <person name="Ghedin E."/>
            <person name="Wang S."/>
            <person name="Goltsman E."/>
            <person name="Joukov V."/>
            <person name="Ostrovskaya O."/>
            <person name="Tsukerman K."/>
            <person name="Mazur M."/>
            <person name="Comb D."/>
            <person name="Koonin E."/>
            <person name="Slatko B."/>
        </authorList>
    </citation>
    <scope>NUCLEOTIDE SEQUENCE [LARGE SCALE GENOMIC DNA]</scope>
    <source>
        <strain>TRS</strain>
    </source>
</reference>
<protein>
    <recommendedName>
        <fullName evidence="1">ATP-dependent Clp protease proteolytic subunit</fullName>
        <ecNumber evidence="1">3.4.21.92</ecNumber>
    </recommendedName>
    <alternativeName>
        <fullName evidence="1">Endopeptidase Clp</fullName>
    </alternativeName>
</protein>
<dbReference type="EC" id="3.4.21.92" evidence="1"/>
<dbReference type="EMBL" id="AE017321">
    <property type="protein sequence ID" value="AAW71141.1"/>
    <property type="molecule type" value="Genomic_DNA"/>
</dbReference>
<dbReference type="RefSeq" id="WP_011256751.1">
    <property type="nucleotide sequence ID" value="NC_006833.1"/>
</dbReference>
<dbReference type="SMR" id="Q5GS83"/>
<dbReference type="STRING" id="292805.Wbm0553"/>
<dbReference type="MEROPS" id="S14.001"/>
<dbReference type="KEGG" id="wbm:Wbm0553"/>
<dbReference type="eggNOG" id="COG0740">
    <property type="taxonomic scope" value="Bacteria"/>
</dbReference>
<dbReference type="HOGENOM" id="CLU_058707_3_2_5"/>
<dbReference type="Proteomes" id="UP000000534">
    <property type="component" value="Chromosome"/>
</dbReference>
<dbReference type="GO" id="GO:0005737">
    <property type="term" value="C:cytoplasm"/>
    <property type="evidence" value="ECO:0007669"/>
    <property type="project" value="UniProtKB-SubCell"/>
</dbReference>
<dbReference type="GO" id="GO:0009368">
    <property type="term" value="C:endopeptidase Clp complex"/>
    <property type="evidence" value="ECO:0007669"/>
    <property type="project" value="TreeGrafter"/>
</dbReference>
<dbReference type="GO" id="GO:0004176">
    <property type="term" value="F:ATP-dependent peptidase activity"/>
    <property type="evidence" value="ECO:0007669"/>
    <property type="project" value="InterPro"/>
</dbReference>
<dbReference type="GO" id="GO:0051117">
    <property type="term" value="F:ATPase binding"/>
    <property type="evidence" value="ECO:0007669"/>
    <property type="project" value="TreeGrafter"/>
</dbReference>
<dbReference type="GO" id="GO:0004252">
    <property type="term" value="F:serine-type endopeptidase activity"/>
    <property type="evidence" value="ECO:0007669"/>
    <property type="project" value="UniProtKB-UniRule"/>
</dbReference>
<dbReference type="GO" id="GO:0006515">
    <property type="term" value="P:protein quality control for misfolded or incompletely synthesized proteins"/>
    <property type="evidence" value="ECO:0007669"/>
    <property type="project" value="TreeGrafter"/>
</dbReference>
<dbReference type="CDD" id="cd07017">
    <property type="entry name" value="S14_ClpP_2"/>
    <property type="match status" value="1"/>
</dbReference>
<dbReference type="FunFam" id="3.90.226.10:FF:000001">
    <property type="entry name" value="ATP-dependent Clp protease proteolytic subunit"/>
    <property type="match status" value="1"/>
</dbReference>
<dbReference type="Gene3D" id="3.90.226.10">
    <property type="entry name" value="2-enoyl-CoA Hydratase, Chain A, domain 1"/>
    <property type="match status" value="1"/>
</dbReference>
<dbReference type="HAMAP" id="MF_00444">
    <property type="entry name" value="ClpP"/>
    <property type="match status" value="1"/>
</dbReference>
<dbReference type="InterPro" id="IPR001907">
    <property type="entry name" value="ClpP"/>
</dbReference>
<dbReference type="InterPro" id="IPR029045">
    <property type="entry name" value="ClpP/crotonase-like_dom_sf"/>
</dbReference>
<dbReference type="InterPro" id="IPR023562">
    <property type="entry name" value="ClpP/TepA"/>
</dbReference>
<dbReference type="InterPro" id="IPR033135">
    <property type="entry name" value="ClpP_His_AS"/>
</dbReference>
<dbReference type="InterPro" id="IPR018215">
    <property type="entry name" value="ClpP_Ser_AS"/>
</dbReference>
<dbReference type="NCBIfam" id="TIGR00493">
    <property type="entry name" value="clpP"/>
    <property type="match status" value="1"/>
</dbReference>
<dbReference type="NCBIfam" id="NF001368">
    <property type="entry name" value="PRK00277.1"/>
    <property type="match status" value="1"/>
</dbReference>
<dbReference type="NCBIfam" id="NF009205">
    <property type="entry name" value="PRK12553.1"/>
    <property type="match status" value="1"/>
</dbReference>
<dbReference type="PANTHER" id="PTHR10381">
    <property type="entry name" value="ATP-DEPENDENT CLP PROTEASE PROTEOLYTIC SUBUNIT"/>
    <property type="match status" value="1"/>
</dbReference>
<dbReference type="PANTHER" id="PTHR10381:SF70">
    <property type="entry name" value="ATP-DEPENDENT CLP PROTEASE PROTEOLYTIC SUBUNIT"/>
    <property type="match status" value="1"/>
</dbReference>
<dbReference type="Pfam" id="PF00574">
    <property type="entry name" value="CLP_protease"/>
    <property type="match status" value="1"/>
</dbReference>
<dbReference type="PRINTS" id="PR00127">
    <property type="entry name" value="CLPPROTEASEP"/>
</dbReference>
<dbReference type="SUPFAM" id="SSF52096">
    <property type="entry name" value="ClpP/crotonase"/>
    <property type="match status" value="1"/>
</dbReference>
<dbReference type="PROSITE" id="PS00382">
    <property type="entry name" value="CLP_PROTEASE_HIS"/>
    <property type="match status" value="1"/>
</dbReference>
<dbReference type="PROSITE" id="PS00381">
    <property type="entry name" value="CLP_PROTEASE_SER"/>
    <property type="match status" value="1"/>
</dbReference>
<organism>
    <name type="scientific">Wolbachia sp. subsp. Brugia malayi (strain TRS)</name>
    <dbReference type="NCBI Taxonomy" id="292805"/>
    <lineage>
        <taxon>Bacteria</taxon>
        <taxon>Pseudomonadati</taxon>
        <taxon>Pseudomonadota</taxon>
        <taxon>Alphaproteobacteria</taxon>
        <taxon>Rickettsiales</taxon>
        <taxon>Anaplasmataceae</taxon>
        <taxon>Wolbachieae</taxon>
        <taxon>Wolbachia</taxon>
    </lineage>
</organism>
<accession>Q5GS83</accession>
<evidence type="ECO:0000255" key="1">
    <source>
        <dbReference type="HAMAP-Rule" id="MF_00444"/>
    </source>
</evidence>
<sequence length="208" mass="23384">MTLIPIVIEQTSRGERAYDIYSRLVKERIIFVTGPVEDNMASVIVAQLLFLESENPDKDIYMYINSPGGVVTAGLSIYDTMQYIKPDVSTLCIGQAASMGSLLLAAGTEGKRYSLPHSRIMIHQPSGGYQGQATDIEIHANEILRVKRKLNQIYEKHTGNSLKKIEGMMERDKFMDPEEARRIGLIDRVIAERKDIKVENIKVEQKVG</sequence>
<name>CLPP_WOLTR</name>
<keyword id="KW-0963">Cytoplasm</keyword>
<keyword id="KW-0378">Hydrolase</keyword>
<keyword id="KW-0645">Protease</keyword>
<keyword id="KW-1185">Reference proteome</keyword>
<keyword id="KW-0720">Serine protease</keyword>
<feature type="chain" id="PRO_0000179718" description="ATP-dependent Clp protease proteolytic subunit">
    <location>
        <begin position="1"/>
        <end position="208"/>
    </location>
</feature>
<feature type="active site" description="Nucleophile" evidence="1">
    <location>
        <position position="98"/>
    </location>
</feature>
<feature type="active site" evidence="1">
    <location>
        <position position="123"/>
    </location>
</feature>